<accession>P31970</accession>
<accession>B1XMA4</accession>
<dbReference type="EC" id="6.1.1.17" evidence="1"/>
<dbReference type="EMBL" id="CP000951">
    <property type="protein sequence ID" value="ACA99390.1"/>
    <property type="molecule type" value="Genomic_DNA"/>
</dbReference>
<dbReference type="EMBL" id="M99379">
    <property type="protein sequence ID" value="AAA27356.1"/>
    <property type="molecule type" value="Genomic_DNA"/>
</dbReference>
<dbReference type="RefSeq" id="WP_012307013.1">
    <property type="nucleotide sequence ID" value="NZ_JAHHPU010000001.1"/>
</dbReference>
<dbReference type="SMR" id="P31970"/>
<dbReference type="STRING" id="32049.SYNPCC7002_A1394"/>
<dbReference type="KEGG" id="syp:SYNPCC7002_A1394"/>
<dbReference type="eggNOG" id="COG0008">
    <property type="taxonomic scope" value="Bacteria"/>
</dbReference>
<dbReference type="HOGENOM" id="CLU_015768_6_0_3"/>
<dbReference type="Proteomes" id="UP000001688">
    <property type="component" value="Chromosome"/>
</dbReference>
<dbReference type="GO" id="GO:0005829">
    <property type="term" value="C:cytosol"/>
    <property type="evidence" value="ECO:0007669"/>
    <property type="project" value="TreeGrafter"/>
</dbReference>
<dbReference type="GO" id="GO:0005524">
    <property type="term" value="F:ATP binding"/>
    <property type="evidence" value="ECO:0007669"/>
    <property type="project" value="UniProtKB-UniRule"/>
</dbReference>
<dbReference type="GO" id="GO:0004818">
    <property type="term" value="F:glutamate-tRNA ligase activity"/>
    <property type="evidence" value="ECO:0007669"/>
    <property type="project" value="UniProtKB-UniRule"/>
</dbReference>
<dbReference type="GO" id="GO:0000049">
    <property type="term" value="F:tRNA binding"/>
    <property type="evidence" value="ECO:0007669"/>
    <property type="project" value="InterPro"/>
</dbReference>
<dbReference type="GO" id="GO:0008270">
    <property type="term" value="F:zinc ion binding"/>
    <property type="evidence" value="ECO:0007669"/>
    <property type="project" value="InterPro"/>
</dbReference>
<dbReference type="GO" id="GO:0006424">
    <property type="term" value="P:glutamyl-tRNA aminoacylation"/>
    <property type="evidence" value="ECO:0007669"/>
    <property type="project" value="UniProtKB-UniRule"/>
</dbReference>
<dbReference type="CDD" id="cd00808">
    <property type="entry name" value="GluRS_core"/>
    <property type="match status" value="1"/>
</dbReference>
<dbReference type="FunFam" id="3.40.50.620:FF:000007">
    <property type="entry name" value="Glutamate--tRNA ligase"/>
    <property type="match status" value="1"/>
</dbReference>
<dbReference type="Gene3D" id="1.10.10.350">
    <property type="match status" value="1"/>
</dbReference>
<dbReference type="Gene3D" id="1.10.8.70">
    <property type="entry name" value="Glutamate-tRNA synthetase, class I, anticodon-binding domain 1"/>
    <property type="match status" value="1"/>
</dbReference>
<dbReference type="Gene3D" id="1.10.1160.10">
    <property type="entry name" value="Glutamyl-trna Synthetase, Domain 2"/>
    <property type="match status" value="1"/>
</dbReference>
<dbReference type="Gene3D" id="3.90.800.10">
    <property type="entry name" value="Glutamyl-tRNA Synthetase, Domain 3"/>
    <property type="match status" value="1"/>
</dbReference>
<dbReference type="Gene3D" id="3.40.50.620">
    <property type="entry name" value="HUPs"/>
    <property type="match status" value="1"/>
</dbReference>
<dbReference type="HAMAP" id="MF_00022">
    <property type="entry name" value="Glu_tRNA_synth_type1"/>
    <property type="match status" value="1"/>
</dbReference>
<dbReference type="InterPro" id="IPR045462">
    <property type="entry name" value="aa-tRNA-synth_I_cd-bd"/>
</dbReference>
<dbReference type="InterPro" id="IPR020751">
    <property type="entry name" value="aa-tRNA-synth_I_codon-bd_sub2"/>
</dbReference>
<dbReference type="InterPro" id="IPR001412">
    <property type="entry name" value="aa-tRNA-synth_I_CS"/>
</dbReference>
<dbReference type="InterPro" id="IPR008925">
    <property type="entry name" value="aa_tRNA-synth_I_cd-bd_sf"/>
</dbReference>
<dbReference type="InterPro" id="IPR004527">
    <property type="entry name" value="Glu-tRNA-ligase_bac/mito"/>
</dbReference>
<dbReference type="InterPro" id="IPR020752">
    <property type="entry name" value="Glu-tRNA-synth_I_codon-bd_sub1"/>
</dbReference>
<dbReference type="InterPro" id="IPR000924">
    <property type="entry name" value="Glu/Gln-tRNA-synth"/>
</dbReference>
<dbReference type="InterPro" id="IPR020058">
    <property type="entry name" value="Glu/Gln-tRNA-synth_Ib_cat-dom"/>
</dbReference>
<dbReference type="InterPro" id="IPR020061">
    <property type="entry name" value="Glu_tRNA_lig_a-bdl"/>
</dbReference>
<dbReference type="InterPro" id="IPR049940">
    <property type="entry name" value="GluQ/Sye"/>
</dbReference>
<dbReference type="InterPro" id="IPR033910">
    <property type="entry name" value="GluRS_core"/>
</dbReference>
<dbReference type="InterPro" id="IPR014729">
    <property type="entry name" value="Rossmann-like_a/b/a_fold"/>
</dbReference>
<dbReference type="NCBIfam" id="TIGR00464">
    <property type="entry name" value="gltX_bact"/>
    <property type="match status" value="1"/>
</dbReference>
<dbReference type="NCBIfam" id="NF004315">
    <property type="entry name" value="PRK05710.1-4"/>
    <property type="match status" value="1"/>
</dbReference>
<dbReference type="PANTHER" id="PTHR43311">
    <property type="entry name" value="GLUTAMATE--TRNA LIGASE"/>
    <property type="match status" value="1"/>
</dbReference>
<dbReference type="PANTHER" id="PTHR43311:SF2">
    <property type="entry name" value="GLUTAMATE--TRNA LIGASE, MITOCHONDRIAL-RELATED"/>
    <property type="match status" value="1"/>
</dbReference>
<dbReference type="Pfam" id="PF19269">
    <property type="entry name" value="Anticodon_2"/>
    <property type="match status" value="1"/>
</dbReference>
<dbReference type="Pfam" id="PF00749">
    <property type="entry name" value="tRNA-synt_1c"/>
    <property type="match status" value="1"/>
</dbReference>
<dbReference type="PRINTS" id="PR00987">
    <property type="entry name" value="TRNASYNTHGLU"/>
</dbReference>
<dbReference type="SUPFAM" id="SSF48163">
    <property type="entry name" value="An anticodon-binding domain of class I aminoacyl-tRNA synthetases"/>
    <property type="match status" value="1"/>
</dbReference>
<dbReference type="SUPFAM" id="SSF52374">
    <property type="entry name" value="Nucleotidylyl transferase"/>
    <property type="match status" value="1"/>
</dbReference>
<dbReference type="PROSITE" id="PS00178">
    <property type="entry name" value="AA_TRNA_LIGASE_I"/>
    <property type="match status" value="1"/>
</dbReference>
<reference key="1">
    <citation type="submission" date="2008-02" db="EMBL/GenBank/DDBJ databases">
        <title>Complete sequence of Synechococcus sp. PCC 7002.</title>
        <authorList>
            <person name="Li T."/>
            <person name="Zhao J."/>
            <person name="Zhao C."/>
            <person name="Liu Z."/>
            <person name="Zhao F."/>
            <person name="Marquardt J."/>
            <person name="Nomura C.T."/>
            <person name="Persson S."/>
            <person name="Detter J.C."/>
            <person name="Richardson P.M."/>
            <person name="Lanz C."/>
            <person name="Schuster S.C."/>
            <person name="Wang J."/>
            <person name="Li S."/>
            <person name="Huang X."/>
            <person name="Cai T."/>
            <person name="Yu Z."/>
            <person name="Luo J."/>
            <person name="Zhao J."/>
            <person name="Bryant D.A."/>
        </authorList>
    </citation>
    <scope>NUCLEOTIDE SEQUENCE [LARGE SCALE GENOMIC DNA]</scope>
    <source>
        <strain>ATCC 27264 / PCC 7002 / PR-6</strain>
    </source>
</reference>
<reference key="2">
    <citation type="journal article" date="1993" name="Mol. Microbiol.">
        <title>Cloning and characterization of the psaE gene of the cyanobacterium Synechococcus sp. PCC 7002: characterization of a psaE mutant and overproduction of the protein in Escherichia coli.</title>
        <authorList>
            <person name="Zhao J."/>
            <person name="Snyder W."/>
            <person name="Muhlenhoff U."/>
            <person name="Rhiel E."/>
            <person name="Bryant D.A."/>
        </authorList>
    </citation>
    <scope>NUCLEOTIDE SEQUENCE [GENOMIC DNA] OF 1-160</scope>
</reference>
<gene>
    <name evidence="1" type="primary">gltX</name>
    <name type="ordered locus">SYNPCC7002_A1394</name>
</gene>
<protein>
    <recommendedName>
        <fullName evidence="1">Glutamate--tRNA ligase</fullName>
        <ecNumber evidence="1">6.1.1.17</ecNumber>
    </recommendedName>
    <alternativeName>
        <fullName evidence="1">Glutamyl-tRNA synthetase</fullName>
        <shortName evidence="1">GluRS</shortName>
    </alternativeName>
</protein>
<keyword id="KW-0030">Aminoacyl-tRNA synthetase</keyword>
<keyword id="KW-0067">ATP-binding</keyword>
<keyword id="KW-0963">Cytoplasm</keyword>
<keyword id="KW-0436">Ligase</keyword>
<keyword id="KW-0547">Nucleotide-binding</keyword>
<keyword id="KW-0648">Protein biosynthesis</keyword>
<keyword id="KW-1185">Reference proteome</keyword>
<comment type="function">
    <text evidence="1">Catalyzes the attachment of glutamate to tRNA(Glu) in a two-step reaction: glutamate is first activated by ATP to form Glu-AMP and then transferred to the acceptor end of tRNA(Glu).</text>
</comment>
<comment type="catalytic activity">
    <reaction evidence="1">
        <text>tRNA(Glu) + L-glutamate + ATP = L-glutamyl-tRNA(Glu) + AMP + diphosphate</text>
        <dbReference type="Rhea" id="RHEA:23540"/>
        <dbReference type="Rhea" id="RHEA-COMP:9663"/>
        <dbReference type="Rhea" id="RHEA-COMP:9680"/>
        <dbReference type="ChEBI" id="CHEBI:29985"/>
        <dbReference type="ChEBI" id="CHEBI:30616"/>
        <dbReference type="ChEBI" id="CHEBI:33019"/>
        <dbReference type="ChEBI" id="CHEBI:78442"/>
        <dbReference type="ChEBI" id="CHEBI:78520"/>
        <dbReference type="ChEBI" id="CHEBI:456215"/>
        <dbReference type="EC" id="6.1.1.17"/>
    </reaction>
</comment>
<comment type="subunit">
    <text evidence="1">Monomer.</text>
</comment>
<comment type="subcellular location">
    <subcellularLocation>
        <location evidence="1">Cytoplasm</location>
    </subcellularLocation>
</comment>
<comment type="similarity">
    <text evidence="1">Belongs to the class-I aminoacyl-tRNA synthetase family. Glutamate--tRNA ligase type 1 subfamily.</text>
</comment>
<feature type="chain" id="PRO_0000119675" description="Glutamate--tRNA ligase">
    <location>
        <begin position="1"/>
        <end position="481"/>
    </location>
</feature>
<feature type="short sequence motif" description="'HIGH' region" evidence="1">
    <location>
        <begin position="9"/>
        <end position="19"/>
    </location>
</feature>
<feature type="short sequence motif" description="'KMSKS' region" evidence="1">
    <location>
        <begin position="249"/>
        <end position="253"/>
    </location>
</feature>
<feature type="binding site" evidence="1">
    <location>
        <position position="252"/>
    </location>
    <ligand>
        <name>ATP</name>
        <dbReference type="ChEBI" id="CHEBI:30616"/>
    </ligand>
</feature>
<sequence length="481" mass="54135">MTVRVRIAPSPTGNLHIGTARTAVFNWLFAHHHGGTFVLRVEDTDLERSKPEYTENIKTGLQWLGLHWDEGPFFQTQRLDQYKAAIQTLLDQGLAYRCYCTPAELEAMREQQKANNQAPRYDNRHRNLTEAQRAEFEAQGRKPVIRFKIDDAQQIVWQDLIRGTMTWKGSDLGGDMVIARTPEGDESFGQPLYNLAVVVDDIDMQISHVIRGEDHIANTAKQILLYEALGAAVPQFAHTPLILNQEGRKLSKRDGVTSIDDFRQMGFLPQAIANYMSLLGWTPTDSTQEIFTLEEAAKEFSLERVNKAGAKFDWDKLDWINAQYLHQMPIPALTDLLIPYLQAAGYGDYLGDRPWLESLVALVAPSLTRLADVTQETRLLFGDSITLDEKATAQLQTEGVKVILQEILQNIQASTNFTPDEAKALINQATKAHGVKKGVVMKSMRAGLMGELQGPDLMQSWVLLHQKGWDIERLNQAIASI</sequence>
<evidence type="ECO:0000255" key="1">
    <source>
        <dbReference type="HAMAP-Rule" id="MF_00022"/>
    </source>
</evidence>
<proteinExistence type="inferred from homology"/>
<organism>
    <name type="scientific">Picosynechococcus sp. (strain ATCC 27264 / PCC 7002 / PR-6)</name>
    <name type="common">Agmenellum quadruplicatum</name>
    <dbReference type="NCBI Taxonomy" id="32049"/>
    <lineage>
        <taxon>Bacteria</taxon>
        <taxon>Bacillati</taxon>
        <taxon>Cyanobacteriota</taxon>
        <taxon>Cyanophyceae</taxon>
        <taxon>Oscillatoriophycideae</taxon>
        <taxon>Chroococcales</taxon>
        <taxon>Geminocystaceae</taxon>
        <taxon>Picosynechococcus</taxon>
    </lineage>
</organism>
<name>SYE_PICP2</name>